<protein>
    <recommendedName>
        <fullName>Ectonucleoside triphosphate diphosphohydrolase 4</fullName>
        <shortName>NTPDase 4</shortName>
        <ecNumber evidence="4 7">3.6.1.15</ecNumber>
        <ecNumber evidence="4 7">3.6.1.6</ecNumber>
    </recommendedName>
    <alternativeName>
        <fullName evidence="11">Golgi UDPase</fullName>
    </alternativeName>
    <alternativeName>
        <fullName evidence="8">Lysosomal apyrase-like protein of 70 kDa</fullName>
    </alternativeName>
    <alternativeName>
        <fullName evidence="11">Uridine-diphosphatase</fullName>
        <shortName evidence="11">UDPase</shortName>
        <ecNumber evidence="4 7">3.6.1.42</ecNumber>
    </alternativeName>
</protein>
<proteinExistence type="evidence at protein level"/>
<sequence length="616" mass="70255">MGRIGISCLFPASWHFSISPVGCPRILNTNLRQIMVISVLAAAVSLLYFSVVIIRNKYGRLTRDKKFQRYLARVTDIEATDTNNPNVNYGIVVDCGSSGSRVFVYCWPRHNGNPHDLLDIRQMRDKNRKPVVMKIKPGISEFATSPEKVSDYISPLLNFAAEHVPRAKHKETPLYILCTAGMRILPESQQKAILEDLLTDIPVHFDFLFSDSHAEVISGKQEGVYAWIGINFVLGRFEHIEDDDEAVVEVNIPGSESSEAIVRKRTAGILDMGGVSTQIAYEVPKTVSFASSQQEEVAKNLLAEFNLGCDVHQTEHVYRVYVATFLGFGGNAARQRYEDRIFANTIQKNRLLGKQTGLTPDMPYLDPCLPLDIKDEIQQNGQTIYLRGTGDFDLCRETIQPFMNKTNETQTSLNGVYQPPIHFQNSEFYGFSEFYYCTEDVLRMGGDYNAAKFTKAAKDYCATKWSILRERFDRGLYASHADLHRLKYQCFKSAWMFEVFHRGFSFPVNYKSLKTALQVYDKEVQWTLGAILYRTRFLPLRDIQQEAFRASHTHWRGVSFVYNHYLFSGCFLVVLLAILLYLLRLRRIHRRTPRSSSAAALWMEEGLPAQNAPGTL</sequence>
<feature type="chain" id="PRO_0000209911" description="Ectonucleoside triphosphate diphosphohydrolase 4">
    <location>
        <begin position="1"/>
        <end position="616"/>
    </location>
</feature>
<feature type="topological domain" description="Cytoplasmic" evidence="2">
    <location>
        <begin position="1"/>
        <end position="33"/>
    </location>
</feature>
<feature type="transmembrane region" description="Helical" evidence="2">
    <location>
        <begin position="34"/>
        <end position="54"/>
    </location>
</feature>
<feature type="topological domain" description="Lumenal" evidence="13 15">
    <location>
        <begin position="55"/>
        <end position="559"/>
    </location>
</feature>
<feature type="transmembrane region" description="Helical" evidence="2">
    <location>
        <begin position="560"/>
        <end position="580"/>
    </location>
</feature>
<feature type="topological domain" description="Cytoplasmic" evidence="2">
    <location>
        <begin position="581"/>
        <end position="616"/>
    </location>
</feature>
<feature type="active site" description="Proton acceptor" evidence="1">
    <location>
        <position position="222"/>
    </location>
</feature>
<feature type="glycosylation site" description="N-linked (GlcNAc...) asparagine" evidence="6">
    <location>
        <position position="404"/>
    </location>
</feature>
<feature type="glycosylation site" description="N-linked (GlcNAc...) asparagine" evidence="6">
    <location>
        <position position="407"/>
    </location>
</feature>
<feature type="disulfide bond" evidence="6">
    <location>
        <begin position="368"/>
        <end position="395"/>
    </location>
</feature>
<feature type="disulfide bond" evidence="6">
    <location>
        <begin position="461"/>
        <end position="490"/>
    </location>
</feature>
<feature type="splice variant" id="VSP_003614" description="In isoform 2." evidence="10 11">
    <location>
        <begin position="287"/>
        <end position="294"/>
    </location>
</feature>
<feature type="sequence variant" id="VAR_064711" description="Found in a renal cell carcinoma case; somatic mutation; dbSNP:rs549468877." evidence="5">
    <original>I</original>
    <variation>V</variation>
    <location>
        <position position="341"/>
    </location>
</feature>
<feature type="sequence variant" id="VAR_020444" description="In dbSNP:rs2272641.">
    <original>K</original>
    <variation>E</variation>
    <location>
        <position position="354"/>
    </location>
</feature>
<feature type="sequence conflict" description="In Ref. 1; AAC17217." evidence="12" ref="1">
    <original>A</original>
    <variation>AA</variation>
    <location>
        <position position="43"/>
    </location>
</feature>
<feature type="helix" evidence="17">
    <location>
        <begin position="65"/>
        <end position="75"/>
    </location>
</feature>
<feature type="strand" evidence="17">
    <location>
        <begin position="87"/>
        <end position="95"/>
    </location>
</feature>
<feature type="strand" evidence="17">
    <location>
        <begin position="100"/>
        <end position="108"/>
    </location>
</feature>
<feature type="strand" evidence="17">
    <location>
        <begin position="132"/>
        <end position="137"/>
    </location>
</feature>
<feature type="helix" evidence="17">
    <location>
        <begin position="140"/>
        <end position="144"/>
    </location>
</feature>
<feature type="helix" evidence="17">
    <location>
        <begin position="146"/>
        <end position="148"/>
    </location>
</feature>
<feature type="helix" evidence="17">
    <location>
        <begin position="149"/>
        <end position="152"/>
    </location>
</feature>
<feature type="helix" evidence="17">
    <location>
        <begin position="154"/>
        <end position="163"/>
    </location>
</feature>
<feature type="helix" evidence="17">
    <location>
        <begin position="166"/>
        <end position="171"/>
    </location>
</feature>
<feature type="strand" evidence="17">
    <location>
        <begin position="173"/>
        <end position="178"/>
    </location>
</feature>
<feature type="helix" evidence="17">
    <location>
        <begin position="180"/>
        <end position="183"/>
    </location>
</feature>
<feature type="helix" evidence="17">
    <location>
        <begin position="187"/>
        <end position="204"/>
    </location>
</feature>
<feature type="helix" evidence="17">
    <location>
        <begin position="211"/>
        <end position="213"/>
    </location>
</feature>
<feature type="strand" evidence="17">
    <location>
        <begin position="214"/>
        <end position="216"/>
    </location>
</feature>
<feature type="helix" evidence="17">
    <location>
        <begin position="219"/>
        <end position="233"/>
    </location>
</feature>
<feature type="turn" evidence="17">
    <location>
        <begin position="234"/>
        <end position="237"/>
    </location>
</feature>
<feature type="strand" evidence="17">
    <location>
        <begin position="247"/>
        <end position="250"/>
    </location>
</feature>
<feature type="helix" evidence="17">
    <location>
        <begin position="257"/>
        <end position="259"/>
    </location>
</feature>
<feature type="strand" evidence="17">
    <location>
        <begin position="261"/>
        <end position="264"/>
    </location>
</feature>
<feature type="strand" evidence="17">
    <location>
        <begin position="268"/>
        <end position="272"/>
    </location>
</feature>
<feature type="strand" evidence="17">
    <location>
        <begin position="274"/>
        <end position="282"/>
    </location>
</feature>
<feature type="helix" evidence="17">
    <location>
        <begin position="292"/>
        <end position="301"/>
    </location>
</feature>
<feature type="strand" evidence="17">
    <location>
        <begin position="302"/>
        <end position="306"/>
    </location>
</feature>
<feature type="strand" evidence="17">
    <location>
        <begin position="317"/>
        <end position="326"/>
    </location>
</feature>
<feature type="helix" evidence="17">
    <location>
        <begin position="330"/>
        <end position="343"/>
    </location>
</feature>
<feature type="helix" evidence="17">
    <location>
        <begin position="344"/>
        <end position="346"/>
    </location>
</feature>
<feature type="helix" evidence="17">
    <location>
        <begin position="348"/>
        <end position="352"/>
    </location>
</feature>
<feature type="strand" evidence="17">
    <location>
        <begin position="364"/>
        <end position="366"/>
    </location>
</feature>
<feature type="strand" evidence="17">
    <location>
        <begin position="374"/>
        <end position="379"/>
    </location>
</feature>
<feature type="strand" evidence="17">
    <location>
        <begin position="382"/>
        <end position="388"/>
    </location>
</feature>
<feature type="helix" evidence="17">
    <location>
        <begin position="392"/>
        <end position="399"/>
    </location>
</feature>
<feature type="helix" evidence="17">
    <location>
        <begin position="400"/>
        <end position="403"/>
    </location>
</feature>
<feature type="helix" evidence="17">
    <location>
        <begin position="413"/>
        <end position="415"/>
    </location>
</feature>
<feature type="helix" evidence="17">
    <location>
        <begin position="423"/>
        <end position="425"/>
    </location>
</feature>
<feature type="strand" evidence="17">
    <location>
        <begin position="428"/>
        <end position="432"/>
    </location>
</feature>
<feature type="helix" evidence="17">
    <location>
        <begin position="433"/>
        <end position="439"/>
    </location>
</feature>
<feature type="turn" evidence="17">
    <location>
        <begin position="440"/>
        <end position="442"/>
    </location>
</feature>
<feature type="helix" evidence="17">
    <location>
        <begin position="450"/>
        <end position="461"/>
    </location>
</feature>
<feature type="helix" evidence="17">
    <location>
        <begin position="465"/>
        <end position="474"/>
    </location>
</feature>
<feature type="helix" evidence="17">
    <location>
        <begin position="483"/>
        <end position="501"/>
    </location>
</feature>
<feature type="strand" evidence="17">
    <location>
        <begin position="513"/>
        <end position="515"/>
    </location>
</feature>
<feature type="helix" evidence="17">
    <location>
        <begin position="526"/>
        <end position="534"/>
    </location>
</feature>
<feature type="turn" evidence="17">
    <location>
        <begin position="535"/>
        <end position="538"/>
    </location>
</feature>
<feature type="helix" evidence="17">
    <location>
        <begin position="539"/>
        <end position="543"/>
    </location>
</feature>
<feature type="turn" evidence="17">
    <location>
        <begin position="545"/>
        <end position="548"/>
    </location>
</feature>
<reference key="1">
    <citation type="journal article" date="1998" name="J. Biol. Chem.">
        <title>Golgi localization and functional expression of human uridine diphosphatase.</title>
        <authorList>
            <person name="Wang T.-F."/>
            <person name="Guidotti G."/>
        </authorList>
    </citation>
    <scope>NUCLEOTIDE SEQUENCE [MRNA] (ISOFORM 2)</scope>
    <scope>CATALYTIC ACTIVITY</scope>
    <scope>COFACTOR</scope>
    <scope>FUNCTION</scope>
    <scope>SUBCELLULAR LOCATION</scope>
    <scope>TISSUE SPECIFICITY</scope>
    <scope>SUBSTRATE SPECIFICITY</scope>
    <source>
        <tissue>Brain</tissue>
    </source>
</reference>
<reference key="2">
    <citation type="journal article" date="1999" name="J. Cell Sci.">
        <title>A human intracellular apyrase-like protein, LALP70, localizes to lysosomal/autophagic vacuoles.</title>
        <authorList>
            <person name="Biederbick A."/>
            <person name="Rose S."/>
            <person name="Elsaesser H.-P."/>
        </authorList>
    </citation>
    <scope>NUCLEOTIDE SEQUENCE [MRNA] (ISOFORM 1)</scope>
    <scope>SUBCELLULAR LOCATION</scope>
    <scope>TISSUE SPECIFICITY</scope>
    <source>
        <tissue>Pancreatic adenocarcinoma</tissue>
    </source>
</reference>
<reference key="3">
    <citation type="journal article" date="2000" name="J. Biol. Chem.">
        <title>First apyrase splice variants have different enzymatic properties.</title>
        <authorList>
            <person name="Biederbick A."/>
            <person name="Kosan C."/>
            <person name="Kunz J."/>
            <person name="Elsaesser H.-P."/>
        </authorList>
    </citation>
    <scope>NUCLEOTIDE SEQUENCE [GENOMIC DNA] (ISOFORM 1)</scope>
    <scope>ALTERNATIVE SPLICING</scope>
    <scope>CATALYTIC ACTIVITY</scope>
    <scope>FUNCTION</scope>
    <scope>COFACTOR</scope>
</reference>
<reference key="4">
    <citation type="submission" date="2005-09" db="EMBL/GenBank/DDBJ databases">
        <authorList>
            <person name="Mural R.J."/>
            <person name="Istrail S."/>
            <person name="Sutton G.G."/>
            <person name="Florea L."/>
            <person name="Halpern A.L."/>
            <person name="Mobarry C.M."/>
            <person name="Lippert R."/>
            <person name="Walenz B."/>
            <person name="Shatkay H."/>
            <person name="Dew I."/>
            <person name="Miller J.R."/>
            <person name="Flanigan M.J."/>
            <person name="Edwards N.J."/>
            <person name="Bolanos R."/>
            <person name="Fasulo D."/>
            <person name="Halldorsson B.V."/>
            <person name="Hannenhalli S."/>
            <person name="Turner R."/>
            <person name="Yooseph S."/>
            <person name="Lu F."/>
            <person name="Nusskern D.R."/>
            <person name="Shue B.C."/>
            <person name="Zheng X.H."/>
            <person name="Zhong F."/>
            <person name="Delcher A.L."/>
            <person name="Huson D.H."/>
            <person name="Kravitz S.A."/>
            <person name="Mouchard L."/>
            <person name="Reinert K."/>
            <person name="Remington K.A."/>
            <person name="Clark A.G."/>
            <person name="Waterman M.S."/>
            <person name="Eichler E.E."/>
            <person name="Adams M.D."/>
            <person name="Hunkapiller M.W."/>
            <person name="Myers E.W."/>
            <person name="Venter J.C."/>
        </authorList>
    </citation>
    <scope>NUCLEOTIDE SEQUENCE [LARGE SCALE GENOMIC DNA]</scope>
</reference>
<reference key="5">
    <citation type="journal article" date="1997" name="DNA Res.">
        <title>Prediction of the coding sequences of unidentified human genes. VII. The complete sequences of 100 new cDNA clones from brain which can code for large proteins in vitro.</title>
        <authorList>
            <person name="Nagase T."/>
            <person name="Ishikawa K."/>
            <person name="Nakajima D."/>
            <person name="Ohira M."/>
            <person name="Seki N."/>
            <person name="Miyajima N."/>
            <person name="Tanaka A."/>
            <person name="Kotani H."/>
            <person name="Nomura N."/>
            <person name="Ohara O."/>
        </authorList>
    </citation>
    <scope>NUCLEOTIDE SEQUENCE [LARGE SCALE MRNA] OF 59-616 (ISOFORM 2)</scope>
    <source>
        <tissue>Brain</tissue>
    </source>
</reference>
<reference key="6">
    <citation type="journal article" date="2005" name="Nat. Biotechnol.">
        <title>Immunoaffinity profiling of tyrosine phosphorylation in cancer cells.</title>
        <authorList>
            <person name="Rush J."/>
            <person name="Moritz A."/>
            <person name="Lee K.A."/>
            <person name="Guo A."/>
            <person name="Goss V.L."/>
            <person name="Spek E.J."/>
            <person name="Zhang H."/>
            <person name="Zha X.-M."/>
            <person name="Polakiewicz R.D."/>
            <person name="Comb M.J."/>
        </authorList>
    </citation>
    <scope>IDENTIFICATION BY MASS SPECTROMETRY [LARGE SCALE ANALYSIS]</scope>
</reference>
<reference key="7">
    <citation type="journal article" date="2011" name="Nature">
        <title>Exome sequencing identifies frequent mutation of the SWI/SNF complex gene PBRM1 in renal carcinoma.</title>
        <authorList>
            <person name="Varela I."/>
            <person name="Tarpey P."/>
            <person name="Raine K."/>
            <person name="Huang D."/>
            <person name="Ong C.K."/>
            <person name="Stephens P."/>
            <person name="Davies H."/>
            <person name="Jones D."/>
            <person name="Lin M.L."/>
            <person name="Teague J."/>
            <person name="Bignell G."/>
            <person name="Butler A."/>
            <person name="Cho J."/>
            <person name="Dalgliesh G.L."/>
            <person name="Galappaththige D."/>
            <person name="Greenman C."/>
            <person name="Hardy C."/>
            <person name="Jia M."/>
            <person name="Latimer C."/>
            <person name="Lau K.W."/>
            <person name="Marshall J."/>
            <person name="McLaren S."/>
            <person name="Menzies A."/>
            <person name="Mudie L."/>
            <person name="Stebbings L."/>
            <person name="Largaespada D.A."/>
            <person name="Wessels L.F.A."/>
            <person name="Richard S."/>
            <person name="Kahnoski R.J."/>
            <person name="Anema J."/>
            <person name="Tuveson D.A."/>
            <person name="Perez-Mancera P.A."/>
            <person name="Mustonen V."/>
            <person name="Fischer A."/>
            <person name="Adams D.J."/>
            <person name="Rust A."/>
            <person name="Chan-On W."/>
            <person name="Subimerb C."/>
            <person name="Dykema K."/>
            <person name="Furge K."/>
            <person name="Campbell P.J."/>
            <person name="Teh B.T."/>
            <person name="Stratton M.R."/>
            <person name="Futreal P.A."/>
        </authorList>
    </citation>
    <scope>VARIANT VAL-341</scope>
</reference>
<reference key="8">
    <citation type="journal article" date="2020" name="Protein Sci.">
        <title>Crystal structure of the nucleotide-metabolizing enzyme NTPDase4.</title>
        <authorList>
            <person name="Gorelik A."/>
            <person name="Labriola J.M."/>
            <person name="Illes K."/>
            <person name="Nagar B."/>
        </authorList>
    </citation>
    <scope>X-RAY CRYSTALLOGRAPHY (2.60 ANGSTROMS) OF 58-559</scope>
    <scope>DISULFIDE BOND</scope>
    <scope>GLYCOSYLATION AT ASN-404 AND ASN-407</scope>
</reference>
<keyword id="KW-0002">3D-structure</keyword>
<keyword id="KW-0025">Alternative splicing</keyword>
<keyword id="KW-0106">Calcium</keyword>
<keyword id="KW-0968">Cytoplasmic vesicle</keyword>
<keyword id="KW-1015">Disulfide bond</keyword>
<keyword id="KW-0325">Glycoprotein</keyword>
<keyword id="KW-0333">Golgi apparatus</keyword>
<keyword id="KW-0378">Hydrolase</keyword>
<keyword id="KW-0458">Lysosome</keyword>
<keyword id="KW-0460">Magnesium</keyword>
<keyword id="KW-0472">Membrane</keyword>
<keyword id="KW-1267">Proteomics identification</keyword>
<keyword id="KW-1185">Reference proteome</keyword>
<keyword id="KW-0812">Transmembrane</keyword>
<keyword id="KW-1133">Transmembrane helix</keyword>
<organism>
    <name type="scientific">Homo sapiens</name>
    <name type="common">Human</name>
    <dbReference type="NCBI Taxonomy" id="9606"/>
    <lineage>
        <taxon>Eukaryota</taxon>
        <taxon>Metazoa</taxon>
        <taxon>Chordata</taxon>
        <taxon>Craniata</taxon>
        <taxon>Vertebrata</taxon>
        <taxon>Euteleostomi</taxon>
        <taxon>Mammalia</taxon>
        <taxon>Eutheria</taxon>
        <taxon>Euarchontoglires</taxon>
        <taxon>Primates</taxon>
        <taxon>Haplorrhini</taxon>
        <taxon>Catarrhini</taxon>
        <taxon>Hominidae</taxon>
        <taxon>Homo</taxon>
    </lineage>
</organism>
<gene>
    <name evidence="16" type="primary">ENTPD4</name>
    <name type="synonym">KIAA0392</name>
    <name evidence="9" type="synonym">LALP70</name>
    <name type="synonym">LYSAL1</name>
</gene>
<name>ENTP4_HUMAN</name>
<accession>Q9Y227</accession>
<accession>D3DSS3</accession>
<accession>O15092</accession>
<dbReference type="EC" id="3.6.1.15" evidence="4 7"/>
<dbReference type="EC" id="3.6.1.6" evidence="4 7"/>
<dbReference type="EC" id="3.6.1.42" evidence="4 7"/>
<dbReference type="EMBL" id="AF016032">
    <property type="protein sequence ID" value="AAC17217.1"/>
    <property type="molecule type" value="mRNA"/>
</dbReference>
<dbReference type="EMBL" id="AJ131358">
    <property type="protein sequence ID" value="CAB40415.1"/>
    <property type="molecule type" value="mRNA"/>
</dbReference>
<dbReference type="EMBL" id="AJ246165">
    <property type="protein sequence ID" value="CAB45655.1"/>
    <property type="molecule type" value="Genomic_DNA"/>
</dbReference>
<dbReference type="EMBL" id="AJ246166">
    <property type="protein sequence ID" value="CAB45655.1"/>
    <property type="status" value="JOINED"/>
    <property type="molecule type" value="Genomic_DNA"/>
</dbReference>
<dbReference type="EMBL" id="AJ246167">
    <property type="protein sequence ID" value="CAB45655.1"/>
    <property type="status" value="JOINED"/>
    <property type="molecule type" value="Genomic_DNA"/>
</dbReference>
<dbReference type="EMBL" id="AJ246168">
    <property type="protein sequence ID" value="CAB45655.1"/>
    <property type="status" value="JOINED"/>
    <property type="molecule type" value="Genomic_DNA"/>
</dbReference>
<dbReference type="EMBL" id="AJ246169">
    <property type="protein sequence ID" value="CAB45655.1"/>
    <property type="status" value="JOINED"/>
    <property type="molecule type" value="Genomic_DNA"/>
</dbReference>
<dbReference type="EMBL" id="AJ246170">
    <property type="protein sequence ID" value="CAB45655.1"/>
    <property type="status" value="JOINED"/>
    <property type="molecule type" value="Genomic_DNA"/>
</dbReference>
<dbReference type="EMBL" id="AJ246171">
    <property type="protein sequence ID" value="CAB45655.1"/>
    <property type="status" value="JOINED"/>
    <property type="molecule type" value="Genomic_DNA"/>
</dbReference>
<dbReference type="EMBL" id="AJ246172">
    <property type="protein sequence ID" value="CAB45655.1"/>
    <property type="status" value="JOINED"/>
    <property type="molecule type" value="Genomic_DNA"/>
</dbReference>
<dbReference type="EMBL" id="AJ246173">
    <property type="protein sequence ID" value="CAB45655.1"/>
    <property type="status" value="JOINED"/>
    <property type="molecule type" value="Genomic_DNA"/>
</dbReference>
<dbReference type="EMBL" id="AJ246174">
    <property type="protein sequence ID" value="CAB45655.1"/>
    <property type="status" value="JOINED"/>
    <property type="molecule type" value="Genomic_DNA"/>
</dbReference>
<dbReference type="EMBL" id="AJ246175">
    <property type="protein sequence ID" value="CAB45655.1"/>
    <property type="status" value="JOINED"/>
    <property type="molecule type" value="Genomic_DNA"/>
</dbReference>
<dbReference type="EMBL" id="AJ246176">
    <property type="protein sequence ID" value="CAB45655.1"/>
    <property type="status" value="JOINED"/>
    <property type="molecule type" value="Genomic_DNA"/>
</dbReference>
<dbReference type="EMBL" id="CH471080">
    <property type="protein sequence ID" value="EAW63622.1"/>
    <property type="molecule type" value="Genomic_DNA"/>
</dbReference>
<dbReference type="EMBL" id="CH471080">
    <property type="protein sequence ID" value="EAW63623.1"/>
    <property type="molecule type" value="Genomic_DNA"/>
</dbReference>
<dbReference type="EMBL" id="AB002390">
    <property type="protein sequence ID" value="BAA21575.1"/>
    <property type="molecule type" value="mRNA"/>
</dbReference>
<dbReference type="CCDS" id="CCDS47827.1">
    <molecule id="Q9Y227-2"/>
</dbReference>
<dbReference type="CCDS" id="CCDS6041.1">
    <molecule id="Q9Y227-1"/>
</dbReference>
<dbReference type="RefSeq" id="NP_001122402.1">
    <molecule id="Q9Y227-2"/>
    <property type="nucleotide sequence ID" value="NM_001128930.3"/>
</dbReference>
<dbReference type="RefSeq" id="NP_004892.1">
    <molecule id="Q9Y227-1"/>
    <property type="nucleotide sequence ID" value="NM_004901.5"/>
</dbReference>
<dbReference type="PDB" id="6WG5">
    <property type="method" value="X-ray"/>
    <property type="resolution" value="2.60 A"/>
    <property type="chains" value="A=58-559"/>
</dbReference>
<dbReference type="PDBsum" id="6WG5"/>
<dbReference type="SMR" id="Q9Y227"/>
<dbReference type="BioGRID" id="114951">
    <property type="interactions" value="24"/>
</dbReference>
<dbReference type="FunCoup" id="Q9Y227">
    <property type="interactions" value="887"/>
</dbReference>
<dbReference type="IntAct" id="Q9Y227">
    <property type="interactions" value="20"/>
</dbReference>
<dbReference type="STRING" id="9606.ENSP00000351520"/>
<dbReference type="ChEMBL" id="CHEMBL3313834"/>
<dbReference type="GlyCosmos" id="Q9Y227">
    <property type="glycosylation" value="4 sites, 2 glycans"/>
</dbReference>
<dbReference type="GlyGen" id="Q9Y227">
    <property type="glycosylation" value="4 sites, 1 N-linked glycan (1 site), 2 O-linked glycans (2 sites)"/>
</dbReference>
<dbReference type="iPTMnet" id="Q9Y227"/>
<dbReference type="PhosphoSitePlus" id="Q9Y227"/>
<dbReference type="SwissPalm" id="Q9Y227"/>
<dbReference type="BioMuta" id="ENTPD4"/>
<dbReference type="DMDM" id="18203627"/>
<dbReference type="jPOST" id="Q9Y227"/>
<dbReference type="MassIVE" id="Q9Y227"/>
<dbReference type="PaxDb" id="9606-ENSP00000351520"/>
<dbReference type="PeptideAtlas" id="Q9Y227"/>
<dbReference type="ProteomicsDB" id="85614">
    <molecule id="Q9Y227-1"/>
</dbReference>
<dbReference type="ProteomicsDB" id="85615">
    <molecule id="Q9Y227-2"/>
</dbReference>
<dbReference type="Antibodypedia" id="2720">
    <property type="antibodies" value="124 antibodies from 20 providers"/>
</dbReference>
<dbReference type="DNASU" id="9583"/>
<dbReference type="Ensembl" id="ENST00000358689.9">
    <molecule id="Q9Y227-1"/>
    <property type="protein sequence ID" value="ENSP00000351520.4"/>
    <property type="gene ID" value="ENSG00000197217.13"/>
</dbReference>
<dbReference type="Ensembl" id="ENST00000417069.6">
    <molecule id="Q9Y227-2"/>
    <property type="protein sequence ID" value="ENSP00000408573.2"/>
    <property type="gene ID" value="ENSG00000197217.13"/>
</dbReference>
<dbReference type="GeneID" id="9583"/>
<dbReference type="KEGG" id="hsa:9583"/>
<dbReference type="MANE-Select" id="ENST00000358689.9">
    <property type="protein sequence ID" value="ENSP00000351520.4"/>
    <property type="RefSeq nucleotide sequence ID" value="NM_004901.5"/>
    <property type="RefSeq protein sequence ID" value="NP_004892.1"/>
</dbReference>
<dbReference type="UCSC" id="uc003xdl.4">
    <molecule id="Q9Y227-1"/>
    <property type="organism name" value="human"/>
</dbReference>
<dbReference type="AGR" id="HGNC:14573"/>
<dbReference type="CTD" id="9583"/>
<dbReference type="DisGeNET" id="9583"/>
<dbReference type="GeneCards" id="ENTPD4"/>
<dbReference type="HGNC" id="HGNC:14573">
    <property type="gene designation" value="ENTPD4"/>
</dbReference>
<dbReference type="HPA" id="ENSG00000197217">
    <property type="expression patterns" value="Low tissue specificity"/>
</dbReference>
<dbReference type="MIM" id="607577">
    <property type="type" value="gene"/>
</dbReference>
<dbReference type="neXtProt" id="NX_Q9Y227"/>
<dbReference type="OpenTargets" id="ENSG00000197217"/>
<dbReference type="PharmGKB" id="PA30502"/>
<dbReference type="VEuPathDB" id="HostDB:ENSG00000197217"/>
<dbReference type="eggNOG" id="KOG1386">
    <property type="taxonomic scope" value="Eukaryota"/>
</dbReference>
<dbReference type="GeneTree" id="ENSGT01110000267240"/>
<dbReference type="HOGENOM" id="CLU_010246_6_0_1"/>
<dbReference type="InParanoid" id="Q9Y227"/>
<dbReference type="OMA" id="ENPFHRH"/>
<dbReference type="OrthoDB" id="6372431at2759"/>
<dbReference type="PAN-GO" id="Q9Y227">
    <property type="GO annotations" value="5 GO annotations based on evolutionary models"/>
</dbReference>
<dbReference type="PhylomeDB" id="Q9Y227"/>
<dbReference type="TreeFam" id="TF354343"/>
<dbReference type="BioCyc" id="MetaCyc:HS09501-MONOMER"/>
<dbReference type="PathwayCommons" id="Q9Y227"/>
<dbReference type="Reactome" id="R-HSA-8850843">
    <property type="pathway name" value="Phosphate bond hydrolysis by NTPDase proteins"/>
</dbReference>
<dbReference type="SignaLink" id="Q9Y227"/>
<dbReference type="BioGRID-ORCS" id="9583">
    <property type="hits" value="8 hits in 1154 CRISPR screens"/>
</dbReference>
<dbReference type="ChiTaRS" id="ENTPD4">
    <property type="organism name" value="human"/>
</dbReference>
<dbReference type="GenomeRNAi" id="9583"/>
<dbReference type="Pharos" id="Q9Y227">
    <property type="development level" value="Tbio"/>
</dbReference>
<dbReference type="PRO" id="PR:Q9Y227"/>
<dbReference type="Proteomes" id="UP000005640">
    <property type="component" value="Chromosome 8"/>
</dbReference>
<dbReference type="RNAct" id="Q9Y227">
    <property type="molecule type" value="protein"/>
</dbReference>
<dbReference type="Bgee" id="ENSG00000197217">
    <property type="expression patterns" value="Expressed in Brodmann (1909) area 23 and 199 other cell types or tissues"/>
</dbReference>
<dbReference type="ExpressionAtlas" id="Q9Y227">
    <property type="expression patterns" value="baseline and differential"/>
</dbReference>
<dbReference type="GO" id="GO:0000421">
    <property type="term" value="C:autophagosome membrane"/>
    <property type="evidence" value="ECO:0000314"/>
    <property type="project" value="ParkinsonsUK-UCL"/>
</dbReference>
<dbReference type="GO" id="GO:0031410">
    <property type="term" value="C:cytoplasmic vesicle"/>
    <property type="evidence" value="ECO:0007669"/>
    <property type="project" value="UniProtKB-KW"/>
</dbReference>
<dbReference type="GO" id="GO:0005794">
    <property type="term" value="C:Golgi apparatus"/>
    <property type="evidence" value="ECO:0000318"/>
    <property type="project" value="GO_Central"/>
</dbReference>
<dbReference type="GO" id="GO:0000139">
    <property type="term" value="C:Golgi membrane"/>
    <property type="evidence" value="ECO:0000314"/>
    <property type="project" value="UniProtKB"/>
</dbReference>
<dbReference type="GO" id="GO:0005765">
    <property type="term" value="C:lysosomal membrane"/>
    <property type="evidence" value="ECO:0007669"/>
    <property type="project" value="UniProtKB-SubCell"/>
</dbReference>
<dbReference type="GO" id="GO:0016020">
    <property type="term" value="C:membrane"/>
    <property type="evidence" value="ECO:0000318"/>
    <property type="project" value="GO_Central"/>
</dbReference>
<dbReference type="GO" id="GO:0036384">
    <property type="term" value="F:CDP phosphatase activity"/>
    <property type="evidence" value="ECO:0000314"/>
    <property type="project" value="UniProtKB"/>
</dbReference>
<dbReference type="GO" id="GO:0043273">
    <property type="term" value="F:CTPase activity"/>
    <property type="evidence" value="ECO:0000314"/>
    <property type="project" value="UniProtKB"/>
</dbReference>
<dbReference type="GO" id="GO:0004382">
    <property type="term" value="F:GDP phosphatase activity"/>
    <property type="evidence" value="ECO:0000314"/>
    <property type="project" value="UniProtKB"/>
</dbReference>
<dbReference type="GO" id="GO:0003924">
    <property type="term" value="F:GTPase activity"/>
    <property type="evidence" value="ECO:0007669"/>
    <property type="project" value="RHEA"/>
</dbReference>
<dbReference type="GO" id="GO:0017110">
    <property type="term" value="F:nucleoside diphosphate phosphatase activity"/>
    <property type="evidence" value="ECO:0000314"/>
    <property type="project" value="UniProtKB"/>
</dbReference>
<dbReference type="GO" id="GO:0017111">
    <property type="term" value="F:ribonucleoside triphosphate phosphatase activity"/>
    <property type="evidence" value="ECO:0000314"/>
    <property type="project" value="UniProtKB"/>
</dbReference>
<dbReference type="GO" id="GO:0045134">
    <property type="term" value="F:UDP phosphatase activity"/>
    <property type="evidence" value="ECO:0000314"/>
    <property type="project" value="UniProtKB"/>
</dbReference>
<dbReference type="GO" id="GO:0046036">
    <property type="term" value="P:CTP metabolic process"/>
    <property type="evidence" value="ECO:0000314"/>
    <property type="project" value="UniProtKB"/>
</dbReference>
<dbReference type="GO" id="GO:0046712">
    <property type="term" value="P:GDP catabolic process"/>
    <property type="evidence" value="ECO:0000314"/>
    <property type="project" value="UniProtKB"/>
</dbReference>
<dbReference type="GO" id="GO:0034656">
    <property type="term" value="P:nucleobase-containing small molecule catabolic process"/>
    <property type="evidence" value="ECO:0000314"/>
    <property type="project" value="UniProtKB"/>
</dbReference>
<dbReference type="GO" id="GO:0006256">
    <property type="term" value="P:UDP catabolic process"/>
    <property type="evidence" value="ECO:0000314"/>
    <property type="project" value="UniProtKB"/>
</dbReference>
<dbReference type="CDD" id="cd24045">
    <property type="entry name" value="ASKHA_NBD_NTPDase4-like"/>
    <property type="match status" value="1"/>
</dbReference>
<dbReference type="FunFam" id="3.30.420.40:FF:000057">
    <property type="entry name" value="Ectonucleoside triphosphate diphosphohydrolase 4"/>
    <property type="match status" value="1"/>
</dbReference>
<dbReference type="FunFam" id="3.30.420.150:FF:000003">
    <property type="entry name" value="ectonucleoside triphosphate diphosphohydrolase 7"/>
    <property type="match status" value="1"/>
</dbReference>
<dbReference type="Gene3D" id="3.30.420.40">
    <property type="match status" value="1"/>
</dbReference>
<dbReference type="Gene3D" id="3.30.420.150">
    <property type="entry name" value="Exopolyphosphatase. Domain 2"/>
    <property type="match status" value="1"/>
</dbReference>
<dbReference type="InterPro" id="IPR000407">
    <property type="entry name" value="GDA1_CD39_NTPase"/>
</dbReference>
<dbReference type="PANTHER" id="PTHR11782">
    <property type="entry name" value="ADENOSINE/GUANOSINE DIPHOSPHATASE"/>
    <property type="match status" value="1"/>
</dbReference>
<dbReference type="PANTHER" id="PTHR11782:SF29">
    <property type="entry name" value="ECTONUCLEOSIDE TRIPHOSPHATE DIPHOSPHOHYDROLASE 4"/>
    <property type="match status" value="1"/>
</dbReference>
<dbReference type="Pfam" id="PF01150">
    <property type="entry name" value="GDA1_CD39"/>
    <property type="match status" value="1"/>
</dbReference>
<dbReference type="PROSITE" id="PS01238">
    <property type="entry name" value="GDA1_CD39_NTPASE"/>
    <property type="match status" value="1"/>
</dbReference>
<comment type="function">
    <molecule>Isoform 1</molecule>
    <text evidence="4 7">Catalyzes the hydrolysis of nucleoside triphosphates and diphosphates in a calcium- or magnesium-dependent manner, with a preference for pyrimidines. Preferentially hydrolyzes UTP and TTP. AMP, ADP, ATP and UMP are not substrates (PubMed:10858452, PubMed:9556635). Preferentially activated by Ca(2+) over Mg(2+) (PubMed:10858452).</text>
</comment>
<comment type="function">
    <molecule>Isoform 2</molecule>
    <text evidence="4 7">Has a broad substrate specificity with the ability of cleaving all nucleotide di- and triphosphates with the exception of adenosine di- and triphosphate (ADP and ATP). Preferentially hydrolyzes CTP, UDP, CDP, GTP and GDP. Can use either Ca(2+) or Mg(2+) equally.</text>
</comment>
<comment type="catalytic activity">
    <reaction evidence="4 7">
        <text>a ribonucleoside 5'-diphosphate + H2O = a ribonucleoside 5'-phosphate + phosphate + H(+)</text>
        <dbReference type="Rhea" id="RHEA:36799"/>
        <dbReference type="ChEBI" id="CHEBI:15377"/>
        <dbReference type="ChEBI" id="CHEBI:15378"/>
        <dbReference type="ChEBI" id="CHEBI:43474"/>
        <dbReference type="ChEBI" id="CHEBI:57930"/>
        <dbReference type="ChEBI" id="CHEBI:58043"/>
        <dbReference type="EC" id="3.6.1.6"/>
    </reaction>
    <physiologicalReaction direction="left-to-right" evidence="14">
        <dbReference type="Rhea" id="RHEA:36800"/>
    </physiologicalReaction>
</comment>
<comment type="catalytic activity">
    <reaction evidence="4 7">
        <text>a ribonucleoside 5'-triphosphate + H2O = a ribonucleoside 5'-diphosphate + phosphate + H(+)</text>
        <dbReference type="Rhea" id="RHEA:23680"/>
        <dbReference type="ChEBI" id="CHEBI:15377"/>
        <dbReference type="ChEBI" id="CHEBI:15378"/>
        <dbReference type="ChEBI" id="CHEBI:43474"/>
        <dbReference type="ChEBI" id="CHEBI:57930"/>
        <dbReference type="ChEBI" id="CHEBI:61557"/>
        <dbReference type="EC" id="3.6.1.15"/>
    </reaction>
    <physiologicalReaction direction="left-to-right" evidence="4 7">
        <dbReference type="Rhea" id="RHEA:23681"/>
    </physiologicalReaction>
</comment>
<comment type="catalytic activity">
    <reaction evidence="4 7">
        <text>UDP + H2O = UMP + phosphate + H(+)</text>
        <dbReference type="Rhea" id="RHEA:64876"/>
        <dbReference type="ChEBI" id="CHEBI:15377"/>
        <dbReference type="ChEBI" id="CHEBI:15378"/>
        <dbReference type="ChEBI" id="CHEBI:43474"/>
        <dbReference type="ChEBI" id="CHEBI:57865"/>
        <dbReference type="ChEBI" id="CHEBI:58223"/>
        <dbReference type="EC" id="3.6.1.6"/>
    </reaction>
    <physiologicalReaction direction="left-to-right" evidence="14">
        <dbReference type="Rhea" id="RHEA:64877"/>
    </physiologicalReaction>
</comment>
<comment type="catalytic activity">
    <reaction evidence="4">
        <text>UTP + H2O = UDP + phosphate + H(+)</text>
        <dbReference type="Rhea" id="RHEA:64900"/>
        <dbReference type="ChEBI" id="CHEBI:15377"/>
        <dbReference type="ChEBI" id="CHEBI:15378"/>
        <dbReference type="ChEBI" id="CHEBI:43474"/>
        <dbReference type="ChEBI" id="CHEBI:46398"/>
        <dbReference type="ChEBI" id="CHEBI:58223"/>
    </reaction>
</comment>
<comment type="catalytic activity">
    <reaction evidence="4 7">
        <text>CTP + H2O = CDP + phosphate + H(+)</text>
        <dbReference type="Rhea" id="RHEA:29387"/>
        <dbReference type="ChEBI" id="CHEBI:15377"/>
        <dbReference type="ChEBI" id="CHEBI:15378"/>
        <dbReference type="ChEBI" id="CHEBI:37563"/>
        <dbReference type="ChEBI" id="CHEBI:43474"/>
        <dbReference type="ChEBI" id="CHEBI:58069"/>
    </reaction>
    <physiologicalReaction direction="left-to-right" evidence="14">
        <dbReference type="Rhea" id="RHEA:29388"/>
    </physiologicalReaction>
</comment>
<comment type="catalytic activity">
    <reaction evidence="4 7">
        <text>GDP + H2O = GMP + phosphate + H(+)</text>
        <dbReference type="Rhea" id="RHEA:22156"/>
        <dbReference type="ChEBI" id="CHEBI:15377"/>
        <dbReference type="ChEBI" id="CHEBI:15378"/>
        <dbReference type="ChEBI" id="CHEBI:43474"/>
        <dbReference type="ChEBI" id="CHEBI:58115"/>
        <dbReference type="ChEBI" id="CHEBI:58189"/>
        <dbReference type="EC" id="3.6.1.42"/>
    </reaction>
</comment>
<comment type="catalytic activity">
    <reaction evidence="4">
        <text>GTP + H2O = GDP + phosphate + H(+)</text>
        <dbReference type="Rhea" id="RHEA:19669"/>
        <dbReference type="ChEBI" id="CHEBI:15377"/>
        <dbReference type="ChEBI" id="CHEBI:15378"/>
        <dbReference type="ChEBI" id="CHEBI:37565"/>
        <dbReference type="ChEBI" id="CHEBI:43474"/>
        <dbReference type="ChEBI" id="CHEBI:58189"/>
    </reaction>
    <physiologicalReaction direction="left-to-right" evidence="14">
        <dbReference type="Rhea" id="RHEA:19670"/>
    </physiologicalReaction>
</comment>
<comment type="catalytic activity">
    <reaction evidence="4">
        <text>5-methyl-UTP + H2O = 5-methyl-UDP + phosphate + H(+)</text>
        <dbReference type="Rhea" id="RHEA:65580"/>
        <dbReference type="ChEBI" id="CHEBI:15377"/>
        <dbReference type="ChEBI" id="CHEBI:15378"/>
        <dbReference type="ChEBI" id="CHEBI:43474"/>
        <dbReference type="ChEBI" id="CHEBI:61417"/>
        <dbReference type="ChEBI" id="CHEBI:63527"/>
    </reaction>
    <physiologicalReaction direction="left-to-right" evidence="12">
        <dbReference type="Rhea" id="RHEA:65581"/>
    </physiologicalReaction>
</comment>
<comment type="cofactor">
    <cofactor evidence="4 7">
        <name>Ca(2+)</name>
        <dbReference type="ChEBI" id="CHEBI:29108"/>
    </cofactor>
    <cofactor evidence="4 7">
        <name>Mg(2+)</name>
        <dbReference type="ChEBI" id="CHEBI:18420"/>
    </cofactor>
</comment>
<comment type="interaction">
    <interactant intactId="EBI-2834366">
        <id>Q9Y227</id>
    </interactant>
    <interactant intactId="EBI-2908417">
        <id>Q9UHG3</id>
        <label>PCYOX1</label>
    </interactant>
    <organismsDiffer>false</organismsDiffer>
    <experiments>2</experiments>
</comment>
<comment type="subcellular location">
    <molecule>Isoform 1</molecule>
    <subcellularLocation>
        <location evidence="3">Cytoplasmic vesicle</location>
        <location evidence="3">Autophagosome membrane</location>
        <topology evidence="12">Multi-pass membrane protein</topology>
    </subcellularLocation>
    <subcellularLocation>
        <location evidence="3">Lysosome membrane</location>
        <topology>Multi-pass membrane protein</topology>
    </subcellularLocation>
</comment>
<comment type="subcellular location">
    <molecule>Isoform 2</molecule>
    <subcellularLocation>
        <location evidence="7">Golgi apparatus membrane</location>
        <topology evidence="2">Multi-pass membrane protein</topology>
    </subcellularLocation>
</comment>
<comment type="alternative products">
    <event type="alternative splicing"/>
    <isoform>
        <id>Q9Y227-1</id>
        <name>1</name>
        <name evidence="8">LALP70</name>
        <sequence type="displayed"/>
    </isoform>
    <isoform>
        <id>Q9Y227-2</id>
        <name>2</name>
        <name evidence="9">LALP70V</name>
        <sequence type="described" ref="VSP_003614"/>
    </isoform>
</comment>
<comment type="tissue specificity">
    <text evidence="3 7">Ubiquitous. Highest expression in testis and lowest in bladder.</text>
</comment>
<comment type="similarity">
    <text evidence="12">Belongs to the GDA1/CD39 NTPase family.</text>
</comment>
<evidence type="ECO:0000250" key="1">
    <source>
        <dbReference type="UniProtKB" id="O35795"/>
    </source>
</evidence>
<evidence type="ECO:0000255" key="2"/>
<evidence type="ECO:0000269" key="3">
    <source>
    </source>
</evidence>
<evidence type="ECO:0000269" key="4">
    <source>
    </source>
</evidence>
<evidence type="ECO:0000269" key="5">
    <source>
    </source>
</evidence>
<evidence type="ECO:0000269" key="6">
    <source>
    </source>
</evidence>
<evidence type="ECO:0000269" key="7">
    <source>
    </source>
</evidence>
<evidence type="ECO:0000303" key="8">
    <source>
    </source>
</evidence>
<evidence type="ECO:0000303" key="9">
    <source>
    </source>
</evidence>
<evidence type="ECO:0000303" key="10">
    <source>
    </source>
</evidence>
<evidence type="ECO:0000303" key="11">
    <source>
    </source>
</evidence>
<evidence type="ECO:0000305" key="12"/>
<evidence type="ECO:0000305" key="13">
    <source>
    </source>
</evidence>
<evidence type="ECO:0000305" key="14">
    <source>
    </source>
</evidence>
<evidence type="ECO:0000305" key="15">
    <source>
    </source>
</evidence>
<evidence type="ECO:0000312" key="16">
    <source>
        <dbReference type="HGNC" id="HGNC:14573"/>
    </source>
</evidence>
<evidence type="ECO:0007829" key="17">
    <source>
        <dbReference type="PDB" id="6WG5"/>
    </source>
</evidence>